<comment type="function">
    <text evidence="1">Ligates lysine onto the cytidine present at position 34 of the AUA codon-specific tRNA(Ile) that contains the anticodon CAU, in an ATP-dependent manner. Cytidine is converted to lysidine, thus changing the amino acid specificity of the tRNA from methionine to isoleucine.</text>
</comment>
<comment type="catalytic activity">
    <reaction evidence="1">
        <text>cytidine(34) in tRNA(Ile2) + L-lysine + ATP = lysidine(34) in tRNA(Ile2) + AMP + diphosphate + H(+)</text>
        <dbReference type="Rhea" id="RHEA:43744"/>
        <dbReference type="Rhea" id="RHEA-COMP:10625"/>
        <dbReference type="Rhea" id="RHEA-COMP:10670"/>
        <dbReference type="ChEBI" id="CHEBI:15378"/>
        <dbReference type="ChEBI" id="CHEBI:30616"/>
        <dbReference type="ChEBI" id="CHEBI:32551"/>
        <dbReference type="ChEBI" id="CHEBI:33019"/>
        <dbReference type="ChEBI" id="CHEBI:82748"/>
        <dbReference type="ChEBI" id="CHEBI:83665"/>
        <dbReference type="ChEBI" id="CHEBI:456215"/>
        <dbReference type="EC" id="6.3.4.19"/>
    </reaction>
</comment>
<comment type="subcellular location">
    <subcellularLocation>
        <location evidence="1">Cytoplasm</location>
    </subcellularLocation>
</comment>
<comment type="domain">
    <text>The N-terminal region contains the highly conserved SGGXDS motif, predicted to be a P-loop motif involved in ATP binding.</text>
</comment>
<comment type="similarity">
    <text evidence="1">Belongs to the tRNA(Ile)-lysidine synthase family.</text>
</comment>
<proteinExistence type="inferred from homology"/>
<feature type="chain" id="PRO_0000181733" description="tRNA(Ile)-lysidine synthase">
    <location>
        <begin position="1"/>
        <end position="426"/>
    </location>
</feature>
<feature type="binding site" evidence="1">
    <location>
        <begin position="19"/>
        <end position="24"/>
    </location>
    <ligand>
        <name>ATP</name>
        <dbReference type="ChEBI" id="CHEBI:30616"/>
    </ligand>
</feature>
<accession>Q9JUE9</accession>
<accession>A1IRX7</accession>
<keyword id="KW-0067">ATP-binding</keyword>
<keyword id="KW-0963">Cytoplasm</keyword>
<keyword id="KW-0436">Ligase</keyword>
<keyword id="KW-0547">Nucleotide-binding</keyword>
<keyword id="KW-0819">tRNA processing</keyword>
<protein>
    <recommendedName>
        <fullName evidence="1">tRNA(Ile)-lysidine synthase</fullName>
        <ecNumber evidence="1">6.3.4.19</ecNumber>
    </recommendedName>
    <alternativeName>
        <fullName evidence="1">tRNA(Ile)-2-lysyl-cytidine synthase</fullName>
    </alternativeName>
    <alternativeName>
        <fullName evidence="1">tRNA(Ile)-lysidine synthetase</fullName>
    </alternativeName>
</protein>
<reference key="1">
    <citation type="journal article" date="2000" name="Nature">
        <title>Complete DNA sequence of a serogroup A strain of Neisseria meningitidis Z2491.</title>
        <authorList>
            <person name="Parkhill J."/>
            <person name="Achtman M."/>
            <person name="James K.D."/>
            <person name="Bentley S.D."/>
            <person name="Churcher C.M."/>
            <person name="Klee S.R."/>
            <person name="Morelli G."/>
            <person name="Basham D."/>
            <person name="Brown D."/>
            <person name="Chillingworth T."/>
            <person name="Davies R.M."/>
            <person name="Davis P."/>
            <person name="Devlin K."/>
            <person name="Feltwell T."/>
            <person name="Hamlin N."/>
            <person name="Holroyd S."/>
            <person name="Jagels K."/>
            <person name="Leather S."/>
            <person name="Moule S."/>
            <person name="Mungall K.L."/>
            <person name="Quail M.A."/>
            <person name="Rajandream M.A."/>
            <person name="Rutherford K.M."/>
            <person name="Simmonds M."/>
            <person name="Skelton J."/>
            <person name="Whitehead S."/>
            <person name="Spratt B.G."/>
            <person name="Barrell B.G."/>
        </authorList>
    </citation>
    <scope>NUCLEOTIDE SEQUENCE [LARGE SCALE GENOMIC DNA]</scope>
    <source>
        <strain>DSM 15465 / Z2491</strain>
    </source>
</reference>
<organism>
    <name type="scientific">Neisseria meningitidis serogroup A / serotype 4A (strain DSM 15465 / Z2491)</name>
    <dbReference type="NCBI Taxonomy" id="122587"/>
    <lineage>
        <taxon>Bacteria</taxon>
        <taxon>Pseudomonadati</taxon>
        <taxon>Pseudomonadota</taxon>
        <taxon>Betaproteobacteria</taxon>
        <taxon>Neisseriales</taxon>
        <taxon>Neisseriaceae</taxon>
        <taxon>Neisseria</taxon>
    </lineage>
</organism>
<gene>
    <name evidence="1" type="primary">tilS</name>
    <name type="ordered locus">NMA1350</name>
</gene>
<sequence length="426" mass="47732">MKDCFPQGLNGKKTAVALSGGLDSVVLLHLLVRAGKKGGFIPDALHIHHGLSPRADDWADFCQNYCDMLGVGLETVKVCVEKNGLGIEAAARQKRYAAFAEKGFDVLALAHHRDDQIETFMLAVARGGGLRALAAMPAVRPFGEKGIIWRPLLPFSRQDIWDYAQKHGLPNIEDESNTDTAYLRNRFRHRILPELSAQIPHFGRHVLNNVRALQEDLALLDEVVVQDCRWVCGAGYFDTARWLTFSPRRKTHILRHFLKENGIPVPNQNALADIARVLTEAKTGRWNLQGFELHHYAGRLFVFRLEKTDKLRFLKDRQISGNLREILTGQGFVLKRHPFGLPEHLLEQDGILRTVAASDTLAMGGIHKDVKKILQGKRVLPVLRPIWPLVADSGNRPLALANCCADFQYSVSDGILPVHPDFPILF</sequence>
<name>TILS_NEIMA</name>
<dbReference type="EC" id="6.3.4.19" evidence="1"/>
<dbReference type="EMBL" id="AL157959">
    <property type="protein sequence ID" value="CAM08525.1"/>
    <property type="molecule type" value="Genomic_DNA"/>
</dbReference>
<dbReference type="PIR" id="A81904">
    <property type="entry name" value="A81904"/>
</dbReference>
<dbReference type="SMR" id="Q9JUE9"/>
<dbReference type="EnsemblBacteria" id="CAM08525">
    <property type="protein sequence ID" value="CAM08525"/>
    <property type="gene ID" value="NMA1350"/>
</dbReference>
<dbReference type="KEGG" id="nma:NMA1350"/>
<dbReference type="HOGENOM" id="CLU_018869_2_0_4"/>
<dbReference type="Proteomes" id="UP000000626">
    <property type="component" value="Chromosome"/>
</dbReference>
<dbReference type="GO" id="GO:0005737">
    <property type="term" value="C:cytoplasm"/>
    <property type="evidence" value="ECO:0007669"/>
    <property type="project" value="UniProtKB-SubCell"/>
</dbReference>
<dbReference type="GO" id="GO:0005524">
    <property type="term" value="F:ATP binding"/>
    <property type="evidence" value="ECO:0007669"/>
    <property type="project" value="UniProtKB-UniRule"/>
</dbReference>
<dbReference type="GO" id="GO:0032267">
    <property type="term" value="F:tRNA(Ile)-lysidine synthase activity"/>
    <property type="evidence" value="ECO:0007669"/>
    <property type="project" value="UniProtKB-EC"/>
</dbReference>
<dbReference type="GO" id="GO:0006400">
    <property type="term" value="P:tRNA modification"/>
    <property type="evidence" value="ECO:0007669"/>
    <property type="project" value="UniProtKB-UniRule"/>
</dbReference>
<dbReference type="CDD" id="cd01992">
    <property type="entry name" value="TilS_N"/>
    <property type="match status" value="1"/>
</dbReference>
<dbReference type="Gene3D" id="1.20.59.20">
    <property type="match status" value="1"/>
</dbReference>
<dbReference type="Gene3D" id="3.40.50.620">
    <property type="entry name" value="HUPs"/>
    <property type="match status" value="1"/>
</dbReference>
<dbReference type="HAMAP" id="MF_01161">
    <property type="entry name" value="tRNA_Ile_lys_synt"/>
    <property type="match status" value="1"/>
</dbReference>
<dbReference type="InterPro" id="IPR012796">
    <property type="entry name" value="Lysidine-tRNA-synth_C"/>
</dbReference>
<dbReference type="InterPro" id="IPR014729">
    <property type="entry name" value="Rossmann-like_a/b/a_fold"/>
</dbReference>
<dbReference type="InterPro" id="IPR011063">
    <property type="entry name" value="TilS/TtcA_N"/>
</dbReference>
<dbReference type="InterPro" id="IPR012094">
    <property type="entry name" value="tRNA_Ile_lys_synt"/>
</dbReference>
<dbReference type="InterPro" id="IPR012795">
    <property type="entry name" value="tRNA_Ile_lys_synt_N"/>
</dbReference>
<dbReference type="InterPro" id="IPR015262">
    <property type="entry name" value="tRNA_Ile_lys_synt_subst-bd"/>
</dbReference>
<dbReference type="NCBIfam" id="TIGR02433">
    <property type="entry name" value="lysidine_TilS_C"/>
    <property type="match status" value="1"/>
</dbReference>
<dbReference type="NCBIfam" id="TIGR02432">
    <property type="entry name" value="lysidine_TilS_N"/>
    <property type="match status" value="1"/>
</dbReference>
<dbReference type="PANTHER" id="PTHR43033">
    <property type="entry name" value="TRNA(ILE)-LYSIDINE SYNTHASE-RELATED"/>
    <property type="match status" value="1"/>
</dbReference>
<dbReference type="PANTHER" id="PTHR43033:SF1">
    <property type="entry name" value="TRNA(ILE)-LYSIDINE SYNTHASE-RELATED"/>
    <property type="match status" value="1"/>
</dbReference>
<dbReference type="Pfam" id="PF01171">
    <property type="entry name" value="ATP_bind_3"/>
    <property type="match status" value="1"/>
</dbReference>
<dbReference type="Pfam" id="PF09179">
    <property type="entry name" value="TilS"/>
    <property type="match status" value="1"/>
</dbReference>
<dbReference type="SMART" id="SM00977">
    <property type="entry name" value="TilS_C"/>
    <property type="match status" value="1"/>
</dbReference>
<dbReference type="SUPFAM" id="SSF52402">
    <property type="entry name" value="Adenine nucleotide alpha hydrolases-like"/>
    <property type="match status" value="1"/>
</dbReference>
<dbReference type="SUPFAM" id="SSF82829">
    <property type="entry name" value="MesJ substrate recognition domain-like"/>
    <property type="match status" value="1"/>
</dbReference>
<dbReference type="SUPFAM" id="SSF56037">
    <property type="entry name" value="PheT/TilS domain"/>
    <property type="match status" value="1"/>
</dbReference>
<evidence type="ECO:0000255" key="1">
    <source>
        <dbReference type="HAMAP-Rule" id="MF_01161"/>
    </source>
</evidence>